<reference key="1">
    <citation type="journal article" date="2007" name="Mol. Phylogenet. Evol.">
        <title>Phylogenetic and evolutionary implications of complete chloroplast genome sequences of four early-diverging angiosperms: Buxus (Buxaceae), Chloranthus (Chloranthaceae), Dioscorea (Dioscoreaceae), and Illicium (Schisandraceae).</title>
        <authorList>
            <person name="Hansen D.R."/>
            <person name="Dastidar S.G."/>
            <person name="Cai Z."/>
            <person name="Penaflor C."/>
            <person name="Kuehl J.V."/>
            <person name="Boore J.L."/>
            <person name="Jansen R.K."/>
        </authorList>
    </citation>
    <scope>NUCLEOTIDE SEQUENCE [LARGE SCALE GENOMIC DNA]</scope>
</reference>
<keyword id="KW-0004">4Fe-4S</keyword>
<keyword id="KW-0150">Chloroplast</keyword>
<keyword id="KW-0408">Iron</keyword>
<keyword id="KW-0411">Iron-sulfur</keyword>
<keyword id="KW-0472">Membrane</keyword>
<keyword id="KW-0479">Metal-binding</keyword>
<keyword id="KW-0520">NAD</keyword>
<keyword id="KW-0521">NADP</keyword>
<keyword id="KW-0934">Plastid</keyword>
<keyword id="KW-0618">Plastoquinone</keyword>
<keyword id="KW-0874">Quinone</keyword>
<keyword id="KW-0677">Repeat</keyword>
<keyword id="KW-0793">Thylakoid</keyword>
<keyword id="KW-1278">Translocase</keyword>
<geneLocation type="chloroplast"/>
<feature type="chain" id="PRO_0000298572" description="NAD(P)H-quinone oxidoreductase subunit I, chloroplastic">
    <location>
        <begin position="1"/>
        <end position="180"/>
    </location>
</feature>
<feature type="domain" description="4Fe-4S ferredoxin-type 1" evidence="1">
    <location>
        <begin position="55"/>
        <end position="84"/>
    </location>
</feature>
<feature type="domain" description="4Fe-4S ferredoxin-type 2" evidence="1">
    <location>
        <begin position="95"/>
        <end position="124"/>
    </location>
</feature>
<feature type="binding site" evidence="1">
    <location>
        <position position="64"/>
    </location>
    <ligand>
        <name>[4Fe-4S] cluster</name>
        <dbReference type="ChEBI" id="CHEBI:49883"/>
        <label>1</label>
    </ligand>
</feature>
<feature type="binding site" evidence="1">
    <location>
        <position position="67"/>
    </location>
    <ligand>
        <name>[4Fe-4S] cluster</name>
        <dbReference type="ChEBI" id="CHEBI:49883"/>
        <label>1</label>
    </ligand>
</feature>
<feature type="binding site" evidence="1">
    <location>
        <position position="70"/>
    </location>
    <ligand>
        <name>[4Fe-4S] cluster</name>
        <dbReference type="ChEBI" id="CHEBI:49883"/>
        <label>1</label>
    </ligand>
</feature>
<feature type="binding site" evidence="1">
    <location>
        <position position="74"/>
    </location>
    <ligand>
        <name>[4Fe-4S] cluster</name>
        <dbReference type="ChEBI" id="CHEBI:49883"/>
        <label>2</label>
    </ligand>
</feature>
<feature type="binding site" evidence="1">
    <location>
        <position position="104"/>
    </location>
    <ligand>
        <name>[4Fe-4S] cluster</name>
        <dbReference type="ChEBI" id="CHEBI:49883"/>
        <label>2</label>
    </ligand>
</feature>
<feature type="binding site" evidence="1">
    <location>
        <position position="107"/>
    </location>
    <ligand>
        <name>[4Fe-4S] cluster</name>
        <dbReference type="ChEBI" id="CHEBI:49883"/>
        <label>2</label>
    </ligand>
</feature>
<feature type="binding site" evidence="1">
    <location>
        <position position="110"/>
    </location>
    <ligand>
        <name>[4Fe-4S] cluster</name>
        <dbReference type="ChEBI" id="CHEBI:49883"/>
        <label>2</label>
    </ligand>
</feature>
<feature type="binding site" evidence="1">
    <location>
        <position position="114"/>
    </location>
    <ligand>
        <name>[4Fe-4S] cluster</name>
        <dbReference type="ChEBI" id="CHEBI:49883"/>
        <label>1</label>
    </ligand>
</feature>
<accession>A6MMH3</accession>
<protein>
    <recommendedName>
        <fullName evidence="1">NAD(P)H-quinone oxidoreductase subunit I, chloroplastic</fullName>
        <ecNumber evidence="1">7.1.1.-</ecNumber>
    </recommendedName>
    <alternativeName>
        <fullName evidence="1">NAD(P)H dehydrogenase subunit I</fullName>
        <shortName evidence="1">NDH subunit I</shortName>
    </alternativeName>
    <alternativeName>
        <fullName evidence="1">NADH-plastoquinone oxidoreductase subunit I</fullName>
    </alternativeName>
</protein>
<dbReference type="EC" id="7.1.1.-" evidence="1"/>
<dbReference type="EMBL" id="EF380352">
    <property type="protein sequence ID" value="ABQ43310.1"/>
    <property type="molecule type" value="Genomic_DNA"/>
</dbReference>
<dbReference type="RefSeq" id="YP_001294149.1">
    <property type="nucleotide sequence ID" value="NC_009598.1"/>
</dbReference>
<dbReference type="SMR" id="A6MMH3"/>
<dbReference type="GeneID" id="5236464"/>
<dbReference type="GO" id="GO:0009535">
    <property type="term" value="C:chloroplast thylakoid membrane"/>
    <property type="evidence" value="ECO:0007669"/>
    <property type="project" value="UniProtKB-SubCell"/>
</dbReference>
<dbReference type="GO" id="GO:0051539">
    <property type="term" value="F:4 iron, 4 sulfur cluster binding"/>
    <property type="evidence" value="ECO:0007669"/>
    <property type="project" value="UniProtKB-KW"/>
</dbReference>
<dbReference type="GO" id="GO:0005506">
    <property type="term" value="F:iron ion binding"/>
    <property type="evidence" value="ECO:0007669"/>
    <property type="project" value="UniProtKB-UniRule"/>
</dbReference>
<dbReference type="GO" id="GO:0008137">
    <property type="term" value="F:NADH dehydrogenase (ubiquinone) activity"/>
    <property type="evidence" value="ECO:0007669"/>
    <property type="project" value="InterPro"/>
</dbReference>
<dbReference type="GO" id="GO:0048038">
    <property type="term" value="F:quinone binding"/>
    <property type="evidence" value="ECO:0007669"/>
    <property type="project" value="UniProtKB-KW"/>
</dbReference>
<dbReference type="GO" id="GO:0019684">
    <property type="term" value="P:photosynthesis, light reaction"/>
    <property type="evidence" value="ECO:0007669"/>
    <property type="project" value="UniProtKB-UniRule"/>
</dbReference>
<dbReference type="FunFam" id="3.30.70.3270:FF:000006">
    <property type="entry name" value="NAD(P)H-quinone oxidoreductase subunit I, chloroplastic"/>
    <property type="match status" value="1"/>
</dbReference>
<dbReference type="Gene3D" id="3.30.70.3270">
    <property type="match status" value="1"/>
</dbReference>
<dbReference type="HAMAP" id="MF_01351">
    <property type="entry name" value="NDH1_NuoI"/>
    <property type="match status" value="1"/>
</dbReference>
<dbReference type="InterPro" id="IPR017896">
    <property type="entry name" value="4Fe4S_Fe-S-bd"/>
</dbReference>
<dbReference type="InterPro" id="IPR017900">
    <property type="entry name" value="4Fe4S_Fe_S_CS"/>
</dbReference>
<dbReference type="InterPro" id="IPR010226">
    <property type="entry name" value="NADH_quinone_OxRdtase_chainI"/>
</dbReference>
<dbReference type="InterPro" id="IPR004497">
    <property type="entry name" value="NDHI"/>
</dbReference>
<dbReference type="NCBIfam" id="TIGR00403">
    <property type="entry name" value="ndhI"/>
    <property type="match status" value="1"/>
</dbReference>
<dbReference type="NCBIfam" id="TIGR01971">
    <property type="entry name" value="NuoI"/>
    <property type="match status" value="1"/>
</dbReference>
<dbReference type="NCBIfam" id="NF004537">
    <property type="entry name" value="PRK05888.1-3"/>
    <property type="match status" value="1"/>
</dbReference>
<dbReference type="PANTHER" id="PTHR47275">
    <property type="entry name" value="NAD(P)H-QUINONE OXIDOREDUCTASE SUBUNIT I, CHLOROPLASTIC"/>
    <property type="match status" value="1"/>
</dbReference>
<dbReference type="PANTHER" id="PTHR47275:SF1">
    <property type="entry name" value="NAD(P)H-QUINONE OXIDOREDUCTASE SUBUNIT I, CHLOROPLASTIC"/>
    <property type="match status" value="1"/>
</dbReference>
<dbReference type="Pfam" id="PF12838">
    <property type="entry name" value="Fer4_7"/>
    <property type="match status" value="1"/>
</dbReference>
<dbReference type="SUPFAM" id="SSF54862">
    <property type="entry name" value="4Fe-4S ferredoxins"/>
    <property type="match status" value="1"/>
</dbReference>
<dbReference type="PROSITE" id="PS00198">
    <property type="entry name" value="4FE4S_FER_1"/>
    <property type="match status" value="2"/>
</dbReference>
<dbReference type="PROSITE" id="PS51379">
    <property type="entry name" value="4FE4S_FER_2"/>
    <property type="match status" value="2"/>
</dbReference>
<sequence length="180" mass="20889">MFPMVTGFMNYGQQTVRAARYIGQSFMITLSHANRLPVTIQYPYEKSITSERFRGRIHFELDKCIACEVCVRVCPIDLPVVDWRLETDIRKKRLLNYSIDFGICIFCGNCVEYCPTNCLSMTEEYELSTYDRHELNYNQIALGRLPMSVIEDYTIQTILNSTQIQIVTDKPLNSRTITNS</sequence>
<gene>
    <name evidence="1" type="primary">ndhI</name>
</gene>
<proteinExistence type="inferred from homology"/>
<comment type="function">
    <text evidence="1">NDH shuttles electrons from NAD(P)H:plastoquinone, via FMN and iron-sulfur (Fe-S) centers, to quinones in the photosynthetic chain and possibly in a chloroplast respiratory chain. The immediate electron acceptor for the enzyme in this species is believed to be plastoquinone. Couples the redox reaction to proton translocation, and thus conserves the redox energy in a proton gradient.</text>
</comment>
<comment type="catalytic activity">
    <reaction evidence="1">
        <text>a plastoquinone + NADH + (n+1) H(+)(in) = a plastoquinol + NAD(+) + n H(+)(out)</text>
        <dbReference type="Rhea" id="RHEA:42608"/>
        <dbReference type="Rhea" id="RHEA-COMP:9561"/>
        <dbReference type="Rhea" id="RHEA-COMP:9562"/>
        <dbReference type="ChEBI" id="CHEBI:15378"/>
        <dbReference type="ChEBI" id="CHEBI:17757"/>
        <dbReference type="ChEBI" id="CHEBI:57540"/>
        <dbReference type="ChEBI" id="CHEBI:57945"/>
        <dbReference type="ChEBI" id="CHEBI:62192"/>
    </reaction>
</comment>
<comment type="catalytic activity">
    <reaction evidence="1">
        <text>a plastoquinone + NADPH + (n+1) H(+)(in) = a plastoquinol + NADP(+) + n H(+)(out)</text>
        <dbReference type="Rhea" id="RHEA:42612"/>
        <dbReference type="Rhea" id="RHEA-COMP:9561"/>
        <dbReference type="Rhea" id="RHEA-COMP:9562"/>
        <dbReference type="ChEBI" id="CHEBI:15378"/>
        <dbReference type="ChEBI" id="CHEBI:17757"/>
        <dbReference type="ChEBI" id="CHEBI:57783"/>
        <dbReference type="ChEBI" id="CHEBI:58349"/>
        <dbReference type="ChEBI" id="CHEBI:62192"/>
    </reaction>
</comment>
<comment type="cofactor">
    <cofactor evidence="1">
        <name>[4Fe-4S] cluster</name>
        <dbReference type="ChEBI" id="CHEBI:49883"/>
    </cofactor>
    <text evidence="1">Binds 2 [4Fe-4S] clusters per subunit.</text>
</comment>
<comment type="subunit">
    <text evidence="1">NDH is composed of at least 16 different subunits, 5 of which are encoded in the nucleus.</text>
</comment>
<comment type="subcellular location">
    <subcellularLocation>
        <location evidence="1">Plastid</location>
        <location evidence="1">Chloroplast thylakoid membrane</location>
        <topology evidence="1">Peripheral membrane protein</topology>
    </subcellularLocation>
</comment>
<comment type="similarity">
    <text evidence="1">Belongs to the complex I 23 kDa subunit family.</text>
</comment>
<organism>
    <name type="scientific">Chloranthus spicatus</name>
    <name type="common">Chulantree</name>
    <name type="synonym">Nigrina spicata</name>
    <dbReference type="NCBI Taxonomy" id="13006"/>
    <lineage>
        <taxon>Eukaryota</taxon>
        <taxon>Viridiplantae</taxon>
        <taxon>Streptophyta</taxon>
        <taxon>Embryophyta</taxon>
        <taxon>Tracheophyta</taxon>
        <taxon>Spermatophyta</taxon>
        <taxon>Magnoliopsida</taxon>
        <taxon>Chloranthales</taxon>
        <taxon>Chloranthaceae</taxon>
        <taxon>Chloranthus</taxon>
    </lineage>
</organism>
<evidence type="ECO:0000255" key="1">
    <source>
        <dbReference type="HAMAP-Rule" id="MF_01351"/>
    </source>
</evidence>
<name>NDHI_CHLSC</name>